<name>YBFC_ECOLI</name>
<protein>
    <recommendedName>
        <fullName>Uncharacterized protein YbfC</fullName>
    </recommendedName>
</protein>
<feature type="signal peptide" evidence="1">
    <location>
        <begin position="1"/>
        <end position="19"/>
    </location>
</feature>
<feature type="chain" id="PRO_0000013802" description="Uncharacterized protein YbfC">
    <location>
        <begin position="20"/>
        <end position="189"/>
    </location>
</feature>
<organism>
    <name type="scientific">Escherichia coli (strain K12)</name>
    <dbReference type="NCBI Taxonomy" id="83333"/>
    <lineage>
        <taxon>Bacteria</taxon>
        <taxon>Pseudomonadati</taxon>
        <taxon>Pseudomonadota</taxon>
        <taxon>Gammaproteobacteria</taxon>
        <taxon>Enterobacterales</taxon>
        <taxon>Enterobacteriaceae</taxon>
        <taxon>Escherichia</taxon>
    </lineage>
</organism>
<proteinExistence type="inferred from homology"/>
<reference key="1">
    <citation type="journal article" date="1993" name="J. Bacteriol.">
        <title>Rhs elements of Escherichia coli K-12: complex composites of shared and unique components that have different evolutionary histories.</title>
        <authorList>
            <person name="Zhao S."/>
            <person name="Sandt C.H."/>
            <person name="Feulner G."/>
            <person name="Vlazny D.A."/>
            <person name="Gray J.A."/>
            <person name="Hill C.W."/>
        </authorList>
    </citation>
    <scope>NUCLEOTIDE SEQUENCE [GENOMIC DNA]</scope>
    <source>
        <strain>K12</strain>
    </source>
</reference>
<reference key="2">
    <citation type="journal article" date="1996" name="DNA Res.">
        <title>A 718-kb DNA sequence of the Escherichia coli K-12 genome corresponding to the 12.7-28.0 min region on the linkage map.</title>
        <authorList>
            <person name="Oshima T."/>
            <person name="Aiba H."/>
            <person name="Baba T."/>
            <person name="Fujita K."/>
            <person name="Hayashi K."/>
            <person name="Honjo A."/>
            <person name="Ikemoto K."/>
            <person name="Inada T."/>
            <person name="Itoh T."/>
            <person name="Kajihara M."/>
            <person name="Kanai K."/>
            <person name="Kashimoto K."/>
            <person name="Kimura S."/>
            <person name="Kitagawa M."/>
            <person name="Makino K."/>
            <person name="Masuda S."/>
            <person name="Miki T."/>
            <person name="Mizobuchi K."/>
            <person name="Mori H."/>
            <person name="Motomura K."/>
            <person name="Nakamura Y."/>
            <person name="Nashimoto H."/>
            <person name="Nishio Y."/>
            <person name="Saito N."/>
            <person name="Sampei G."/>
            <person name="Seki Y."/>
            <person name="Tagami H."/>
            <person name="Takemoto K."/>
            <person name="Wada C."/>
            <person name="Yamamoto Y."/>
            <person name="Yano M."/>
            <person name="Horiuchi T."/>
        </authorList>
    </citation>
    <scope>NUCLEOTIDE SEQUENCE [LARGE SCALE GENOMIC DNA]</scope>
    <source>
        <strain>K12 / W3110 / ATCC 27325 / DSM 5911</strain>
    </source>
</reference>
<reference key="3">
    <citation type="journal article" date="1997" name="Science">
        <title>The complete genome sequence of Escherichia coli K-12.</title>
        <authorList>
            <person name="Blattner F.R."/>
            <person name="Plunkett G. III"/>
            <person name="Bloch C.A."/>
            <person name="Perna N.T."/>
            <person name="Burland V."/>
            <person name="Riley M."/>
            <person name="Collado-Vides J."/>
            <person name="Glasner J.D."/>
            <person name="Rode C.K."/>
            <person name="Mayhew G.F."/>
            <person name="Gregor J."/>
            <person name="Davis N.W."/>
            <person name="Kirkpatrick H.A."/>
            <person name="Goeden M.A."/>
            <person name="Rose D.J."/>
            <person name="Mau B."/>
            <person name="Shao Y."/>
        </authorList>
    </citation>
    <scope>NUCLEOTIDE SEQUENCE [LARGE SCALE GENOMIC DNA]</scope>
    <source>
        <strain>K12 / MG1655 / ATCC 47076</strain>
    </source>
</reference>
<reference key="4">
    <citation type="journal article" date="2006" name="Mol. Syst. Biol.">
        <title>Highly accurate genome sequences of Escherichia coli K-12 strains MG1655 and W3110.</title>
        <authorList>
            <person name="Hayashi K."/>
            <person name="Morooka N."/>
            <person name="Yamamoto Y."/>
            <person name="Fujita K."/>
            <person name="Isono K."/>
            <person name="Choi S."/>
            <person name="Ohtsubo E."/>
            <person name="Baba T."/>
            <person name="Wanner B.L."/>
            <person name="Mori H."/>
            <person name="Horiuchi T."/>
        </authorList>
    </citation>
    <scope>NUCLEOTIDE SEQUENCE [LARGE SCALE GENOMIC DNA]</scope>
    <source>
        <strain>K12 / W3110 / ATCC 27325 / DSM 5911</strain>
    </source>
</reference>
<sequence>MKRVLFFLLMIFVSFGVIADCEIQAKDHDCFTIFAKGTIFSAFPVLNNKAMWRWYQNEDIGEYYWQTELGTCKNNKFTPSGARLLIRVGSLRLNENHAIKGTLQELINTAEKTAFLGDRFRSYIRAGIYQKKSSDPVQLLAVLDNSIMVKYFKDEKPTYARMTAHLPNKNESYECLIKIQHELIRSEEK</sequence>
<dbReference type="EMBL" id="L02373">
    <property type="protein sequence ID" value="AAC63074.1"/>
    <property type="molecule type" value="Genomic_DNA"/>
</dbReference>
<dbReference type="EMBL" id="U00096">
    <property type="protein sequence ID" value="AAC73798.1"/>
    <property type="molecule type" value="Genomic_DNA"/>
</dbReference>
<dbReference type="EMBL" id="AP009048">
    <property type="protein sequence ID" value="BAA35362.1"/>
    <property type="molecule type" value="Genomic_DNA"/>
</dbReference>
<dbReference type="PIR" id="G64805">
    <property type="entry name" value="G64805"/>
</dbReference>
<dbReference type="RefSeq" id="NP_415232.1">
    <property type="nucleotide sequence ID" value="NC_000913.3"/>
</dbReference>
<dbReference type="RefSeq" id="WP_000832338.1">
    <property type="nucleotide sequence ID" value="NZ_STEB01000035.1"/>
</dbReference>
<dbReference type="BioGRID" id="4261603">
    <property type="interactions" value="20"/>
</dbReference>
<dbReference type="FunCoup" id="P28915">
    <property type="interactions" value="25"/>
</dbReference>
<dbReference type="IntAct" id="P28915">
    <property type="interactions" value="3"/>
</dbReference>
<dbReference type="STRING" id="511145.b0704"/>
<dbReference type="PaxDb" id="511145-b0704"/>
<dbReference type="EnsemblBacteria" id="AAC73798">
    <property type="protein sequence ID" value="AAC73798"/>
    <property type="gene ID" value="b0704"/>
</dbReference>
<dbReference type="GeneID" id="947288"/>
<dbReference type="KEGG" id="ecj:JW0693"/>
<dbReference type="KEGG" id="eco:b0704"/>
<dbReference type="KEGG" id="ecoc:C3026_03515"/>
<dbReference type="PATRIC" id="fig|511145.12.peg.733"/>
<dbReference type="EchoBASE" id="EB1485"/>
<dbReference type="eggNOG" id="ENOG5033VH6">
    <property type="taxonomic scope" value="Bacteria"/>
</dbReference>
<dbReference type="HOGENOM" id="CLU_120852_0_0_6"/>
<dbReference type="InParanoid" id="P28915"/>
<dbReference type="OMA" id="IAEYYWQ"/>
<dbReference type="OrthoDB" id="9977320at2"/>
<dbReference type="BioCyc" id="EcoCyc:EG11523-MONOMER"/>
<dbReference type="PRO" id="PR:P28915"/>
<dbReference type="Proteomes" id="UP000000625">
    <property type="component" value="Chromosome"/>
</dbReference>
<gene>
    <name type="primary">ybfC</name>
    <name type="ordered locus">b0704</name>
    <name type="ordered locus">JW0693</name>
</gene>
<evidence type="ECO:0000255" key="1"/>
<accession>P28915</accession>
<keyword id="KW-1185">Reference proteome</keyword>
<keyword id="KW-0732">Signal</keyword>